<gene>
    <name evidence="1" type="primary">rpmG1</name>
    <name type="ordered locus">SPs1503</name>
</gene>
<name>RL331_STRPQ</name>
<sequence length="48" mass="5548">MRVKINLECSECGSNNYLTSKNKSSHPEKIKVPKYCPKERKVTLHVET</sequence>
<protein>
    <recommendedName>
        <fullName evidence="1">Large ribosomal subunit protein bL33A</fullName>
    </recommendedName>
    <alternativeName>
        <fullName evidence="1">50S ribosomal protein L33 1</fullName>
    </alternativeName>
</protein>
<comment type="similarity">
    <text evidence="1">Belongs to the bacterial ribosomal protein bL33 family.</text>
</comment>
<evidence type="ECO:0000255" key="1">
    <source>
        <dbReference type="HAMAP-Rule" id="MF_00294"/>
    </source>
</evidence>
<reference key="1">
    <citation type="journal article" date="2003" name="Genome Res.">
        <title>Genome sequence of an M3 strain of Streptococcus pyogenes reveals a large-scale genomic rearrangement in invasive strains and new insights into phage evolution.</title>
        <authorList>
            <person name="Nakagawa I."/>
            <person name="Kurokawa K."/>
            <person name="Yamashita A."/>
            <person name="Nakata M."/>
            <person name="Tomiyasu Y."/>
            <person name="Okahashi N."/>
            <person name="Kawabata S."/>
            <person name="Yamazaki K."/>
            <person name="Shiba T."/>
            <person name="Yasunaga T."/>
            <person name="Hayashi H."/>
            <person name="Hattori M."/>
            <person name="Hamada S."/>
        </authorList>
    </citation>
    <scope>NUCLEOTIDE SEQUENCE [LARGE SCALE GENOMIC DNA]</scope>
    <source>
        <strain>SSI-1</strain>
    </source>
</reference>
<dbReference type="EMBL" id="BA000034">
    <property type="protein sequence ID" value="BAC64598.1"/>
    <property type="molecule type" value="Genomic_DNA"/>
</dbReference>
<dbReference type="SMR" id="Q878E3"/>
<dbReference type="KEGG" id="sps:SPs1503"/>
<dbReference type="HOGENOM" id="CLU_190949_0_2_9"/>
<dbReference type="GO" id="GO:0005737">
    <property type="term" value="C:cytoplasm"/>
    <property type="evidence" value="ECO:0007669"/>
    <property type="project" value="UniProtKB-ARBA"/>
</dbReference>
<dbReference type="GO" id="GO:1990904">
    <property type="term" value="C:ribonucleoprotein complex"/>
    <property type="evidence" value="ECO:0007669"/>
    <property type="project" value="UniProtKB-KW"/>
</dbReference>
<dbReference type="GO" id="GO:0005840">
    <property type="term" value="C:ribosome"/>
    <property type="evidence" value="ECO:0007669"/>
    <property type="project" value="UniProtKB-KW"/>
</dbReference>
<dbReference type="GO" id="GO:0003735">
    <property type="term" value="F:structural constituent of ribosome"/>
    <property type="evidence" value="ECO:0007669"/>
    <property type="project" value="InterPro"/>
</dbReference>
<dbReference type="GO" id="GO:0006412">
    <property type="term" value="P:translation"/>
    <property type="evidence" value="ECO:0007669"/>
    <property type="project" value="UniProtKB-UniRule"/>
</dbReference>
<dbReference type="Gene3D" id="2.20.28.120">
    <property type="entry name" value="Ribosomal protein L33"/>
    <property type="match status" value="1"/>
</dbReference>
<dbReference type="HAMAP" id="MF_00294">
    <property type="entry name" value="Ribosomal_bL33"/>
    <property type="match status" value="1"/>
</dbReference>
<dbReference type="InterPro" id="IPR001705">
    <property type="entry name" value="Ribosomal_bL33"/>
</dbReference>
<dbReference type="InterPro" id="IPR038584">
    <property type="entry name" value="Ribosomal_bL33_sf"/>
</dbReference>
<dbReference type="InterPro" id="IPR011332">
    <property type="entry name" value="Ribosomal_zn-bd"/>
</dbReference>
<dbReference type="NCBIfam" id="NF001764">
    <property type="entry name" value="PRK00504.1"/>
    <property type="match status" value="1"/>
</dbReference>
<dbReference type="NCBIfam" id="NF001860">
    <property type="entry name" value="PRK00595.1"/>
    <property type="match status" value="1"/>
</dbReference>
<dbReference type="NCBIfam" id="TIGR01023">
    <property type="entry name" value="rpmG_bact"/>
    <property type="match status" value="1"/>
</dbReference>
<dbReference type="PANTHER" id="PTHR43168">
    <property type="entry name" value="50S RIBOSOMAL PROTEIN L33, CHLOROPLASTIC"/>
    <property type="match status" value="1"/>
</dbReference>
<dbReference type="PANTHER" id="PTHR43168:SF6">
    <property type="entry name" value="LARGE RIBOSOMAL SUBUNIT PROTEIN BL33A"/>
    <property type="match status" value="1"/>
</dbReference>
<dbReference type="Pfam" id="PF00471">
    <property type="entry name" value="Ribosomal_L33"/>
    <property type="match status" value="1"/>
</dbReference>
<dbReference type="SUPFAM" id="SSF57829">
    <property type="entry name" value="Zn-binding ribosomal proteins"/>
    <property type="match status" value="1"/>
</dbReference>
<feature type="chain" id="PRO_0000356730" description="Large ribosomal subunit protein bL33A">
    <location>
        <begin position="1"/>
        <end position="48"/>
    </location>
</feature>
<organism>
    <name type="scientific">Streptococcus pyogenes serotype M3 (strain SSI-1)</name>
    <dbReference type="NCBI Taxonomy" id="193567"/>
    <lineage>
        <taxon>Bacteria</taxon>
        <taxon>Bacillati</taxon>
        <taxon>Bacillota</taxon>
        <taxon>Bacilli</taxon>
        <taxon>Lactobacillales</taxon>
        <taxon>Streptococcaceae</taxon>
        <taxon>Streptococcus</taxon>
    </lineage>
</organism>
<proteinExistence type="inferred from homology"/>
<keyword id="KW-0687">Ribonucleoprotein</keyword>
<keyword id="KW-0689">Ribosomal protein</keyword>
<accession>Q878E3</accession>